<comment type="subunit">
    <text evidence="1">Homodimer and heterodimers.</text>
</comment>
<comment type="subcellular location">
    <subcellularLocation>
        <location evidence="1">Cell membrane</location>
        <topology evidence="1">Multi-pass membrane protein</topology>
    </subcellularLocation>
</comment>
<comment type="similarity">
    <text evidence="3">Belongs to the Casparian strip membrane proteins (CASP) family.</text>
</comment>
<keyword id="KW-1003">Cell membrane</keyword>
<keyword id="KW-0472">Membrane</keyword>
<keyword id="KW-1185">Reference proteome</keyword>
<keyword id="KW-0812">Transmembrane</keyword>
<keyword id="KW-1133">Transmembrane helix</keyword>
<dbReference type="EMBL" id="GL377639">
    <property type="protein sequence ID" value="EFJ12323.1"/>
    <property type="molecule type" value="Genomic_DNA"/>
</dbReference>
<dbReference type="EnsemblPlants" id="EFJ12323">
    <property type="protein sequence ID" value="EFJ12323"/>
    <property type="gene ID" value="SELMODRAFT_425414"/>
</dbReference>
<dbReference type="Gramene" id="EFJ12323">
    <property type="protein sequence ID" value="EFJ12323"/>
    <property type="gene ID" value="SELMODRAFT_425414"/>
</dbReference>
<dbReference type="KEGG" id="smo:SELMODRAFT_425414"/>
<dbReference type="HOGENOM" id="CLU_1356709_0_0_1"/>
<dbReference type="InParanoid" id="D8ST13"/>
<dbReference type="OMA" id="QQEHVQD"/>
<dbReference type="Proteomes" id="UP000001514">
    <property type="component" value="Unassembled WGS sequence"/>
</dbReference>
<dbReference type="GO" id="GO:0005886">
    <property type="term" value="C:plasma membrane"/>
    <property type="evidence" value="ECO:0007669"/>
    <property type="project" value="UniProtKB-SubCell"/>
</dbReference>
<dbReference type="InterPro" id="IPR006459">
    <property type="entry name" value="CASP/CASPL"/>
</dbReference>
<dbReference type="InterPro" id="IPR006702">
    <property type="entry name" value="CASP_dom"/>
</dbReference>
<dbReference type="NCBIfam" id="TIGR01569">
    <property type="entry name" value="A_tha_TIGR01569"/>
    <property type="match status" value="1"/>
</dbReference>
<dbReference type="PANTHER" id="PTHR33573:SF30">
    <property type="entry name" value="CASP-LIKE PROTEIN 2C1-RELATED"/>
    <property type="match status" value="1"/>
</dbReference>
<dbReference type="PANTHER" id="PTHR33573">
    <property type="entry name" value="CASP-LIKE PROTEIN 4A4"/>
    <property type="match status" value="1"/>
</dbReference>
<dbReference type="Pfam" id="PF04535">
    <property type="entry name" value="CASP_dom"/>
    <property type="match status" value="1"/>
</dbReference>
<sequence length="202" mass="22043">MLELYEKRRALLLLRLAAMFLSLAALLITVLNREDGFFSINVFGSPQPILTKATADFTLVKGLKFFAGAMGIVAGYSFLQLAIAMASMFSGAPSILGGKRMAWLCFVGDMTASHLCAAAAAVSAQLAYLGKRGAPMWSAVCTYFSHYCLVFGLAVIFAFLATLAALLVASISSYHLFRLHGILQQQQQQRRQLQQEHVQDKP</sequence>
<proteinExistence type="inferred from homology"/>
<feature type="chain" id="PRO_0000418680" description="CASP-like protein 2U7">
    <location>
        <begin position="1"/>
        <end position="202"/>
    </location>
</feature>
<feature type="topological domain" description="Cytoplasmic" evidence="2">
    <location>
        <begin position="1"/>
        <end position="10"/>
    </location>
</feature>
<feature type="transmembrane region" description="Helical" evidence="2">
    <location>
        <begin position="11"/>
        <end position="31"/>
    </location>
</feature>
<feature type="topological domain" description="Extracellular" evidence="2">
    <location>
        <begin position="32"/>
        <end position="64"/>
    </location>
</feature>
<feature type="transmembrane region" description="Helical" evidence="2">
    <location>
        <begin position="65"/>
        <end position="85"/>
    </location>
</feature>
<feature type="topological domain" description="Cytoplasmic" evidence="2">
    <location>
        <begin position="86"/>
        <end position="101"/>
    </location>
</feature>
<feature type="transmembrane region" description="Helical" evidence="2">
    <location>
        <begin position="102"/>
        <end position="122"/>
    </location>
</feature>
<feature type="topological domain" description="Extracellular" evidence="2">
    <location>
        <begin position="123"/>
        <end position="148"/>
    </location>
</feature>
<feature type="transmembrane region" description="Helical" evidence="2">
    <location>
        <begin position="149"/>
        <end position="169"/>
    </location>
</feature>
<feature type="topological domain" description="Cytoplasmic" evidence="2">
    <location>
        <begin position="170"/>
        <end position="202"/>
    </location>
</feature>
<evidence type="ECO:0000250" key="1"/>
<evidence type="ECO:0000255" key="2"/>
<evidence type="ECO:0000305" key="3"/>
<accession>D8ST13</accession>
<reference key="1">
    <citation type="journal article" date="2011" name="Science">
        <title>The Selaginella genome identifies genetic changes associated with the evolution of vascular plants.</title>
        <authorList>
            <person name="Banks J.A."/>
            <person name="Nishiyama T."/>
            <person name="Hasebe M."/>
            <person name="Bowman J.L."/>
            <person name="Gribskov M."/>
            <person name="dePamphilis C."/>
            <person name="Albert V.A."/>
            <person name="Aono N."/>
            <person name="Aoyama T."/>
            <person name="Ambrose B.A."/>
            <person name="Ashton N.W."/>
            <person name="Axtell M.J."/>
            <person name="Barker E."/>
            <person name="Barker M.S."/>
            <person name="Bennetzen J.L."/>
            <person name="Bonawitz N.D."/>
            <person name="Chapple C."/>
            <person name="Cheng C."/>
            <person name="Correa L.G."/>
            <person name="Dacre M."/>
            <person name="DeBarry J."/>
            <person name="Dreyer I."/>
            <person name="Elias M."/>
            <person name="Engstrom E.M."/>
            <person name="Estelle M."/>
            <person name="Feng L."/>
            <person name="Finet C."/>
            <person name="Floyd S.K."/>
            <person name="Frommer W.B."/>
            <person name="Fujita T."/>
            <person name="Gramzow L."/>
            <person name="Gutensohn M."/>
            <person name="Harholt J."/>
            <person name="Hattori M."/>
            <person name="Heyl A."/>
            <person name="Hirai T."/>
            <person name="Hiwatashi Y."/>
            <person name="Ishikawa M."/>
            <person name="Iwata M."/>
            <person name="Karol K.G."/>
            <person name="Koehler B."/>
            <person name="Kolukisaoglu U."/>
            <person name="Kubo M."/>
            <person name="Kurata T."/>
            <person name="Lalonde S."/>
            <person name="Li K."/>
            <person name="Li Y."/>
            <person name="Litt A."/>
            <person name="Lyons E."/>
            <person name="Manning G."/>
            <person name="Maruyama T."/>
            <person name="Michael T.P."/>
            <person name="Mikami K."/>
            <person name="Miyazaki S."/>
            <person name="Morinaga S."/>
            <person name="Murata T."/>
            <person name="Mueller-Roeber B."/>
            <person name="Nelson D.R."/>
            <person name="Obara M."/>
            <person name="Oguri Y."/>
            <person name="Olmstead R.G."/>
            <person name="Onodera N."/>
            <person name="Petersen B.L."/>
            <person name="Pils B."/>
            <person name="Prigge M."/>
            <person name="Rensing S.A."/>
            <person name="Riano-Pachon D.M."/>
            <person name="Roberts A.W."/>
            <person name="Sato Y."/>
            <person name="Scheller H.V."/>
            <person name="Schulz B."/>
            <person name="Schulz C."/>
            <person name="Shakirov E.V."/>
            <person name="Shibagaki N."/>
            <person name="Shinohara N."/>
            <person name="Shippen D.E."/>
            <person name="Soerensen I."/>
            <person name="Sotooka R."/>
            <person name="Sugimoto N."/>
            <person name="Sugita M."/>
            <person name="Sumikawa N."/>
            <person name="Tanurdzic M."/>
            <person name="Theissen G."/>
            <person name="Ulvskov P."/>
            <person name="Wakazuki S."/>
            <person name="Weng J.K."/>
            <person name="Willats W.W."/>
            <person name="Wipf D."/>
            <person name="Wolf P.G."/>
            <person name="Yang L."/>
            <person name="Zimmer A.D."/>
            <person name="Zhu Q."/>
            <person name="Mitros T."/>
            <person name="Hellsten U."/>
            <person name="Loque D."/>
            <person name="Otillar R."/>
            <person name="Salamov A."/>
            <person name="Schmutz J."/>
            <person name="Shapiro H."/>
            <person name="Lindquist E."/>
            <person name="Lucas S."/>
            <person name="Rokhsar D."/>
            <person name="Grigoriev I.V."/>
        </authorList>
    </citation>
    <scope>NUCLEOTIDE SEQUENCE [LARGE SCALE GENOMIC DNA]</scope>
</reference>
<reference key="2">
    <citation type="journal article" date="2014" name="Plant Physiol.">
        <title>Functional and evolutionary analysis of the CASPARIAN STRIP MEMBRANE DOMAIN PROTEIN family.</title>
        <authorList>
            <person name="Roppolo D."/>
            <person name="Boeckmann B."/>
            <person name="Pfister A."/>
            <person name="Boutet E."/>
            <person name="Rubio M.C."/>
            <person name="Denervaud-Tendon V."/>
            <person name="Vermeer J.E."/>
            <person name="Gheyselinck J."/>
            <person name="Xenarios I."/>
            <person name="Geldner N."/>
        </authorList>
    </citation>
    <scope>GENE FAMILY</scope>
    <scope>NOMENCLATURE</scope>
</reference>
<organism>
    <name type="scientific">Selaginella moellendorffii</name>
    <name type="common">Spikemoss</name>
    <dbReference type="NCBI Taxonomy" id="88036"/>
    <lineage>
        <taxon>Eukaryota</taxon>
        <taxon>Viridiplantae</taxon>
        <taxon>Streptophyta</taxon>
        <taxon>Embryophyta</taxon>
        <taxon>Tracheophyta</taxon>
        <taxon>Lycopodiopsida</taxon>
        <taxon>Selaginellales</taxon>
        <taxon>Selaginellaceae</taxon>
        <taxon>Selaginella</taxon>
    </lineage>
</organism>
<gene>
    <name type="ORF">SELMODRAFT_425414</name>
</gene>
<name>CSPLF_SELML</name>
<protein>
    <recommendedName>
        <fullName>CASP-like protein 2U7</fullName>
        <shortName>SmCASPL2U7</shortName>
    </recommendedName>
</protein>